<comment type="function">
    <text evidence="4">Ligand for members of the frizzled family of seven transmembrane receptors. Probable developmental protein.</text>
</comment>
<comment type="subcellular location">
    <subcellularLocation>
        <location evidence="1">Secreted</location>
        <location evidence="1">Extracellular space</location>
        <location evidence="1">Extracellular matrix</location>
    </subcellularLocation>
    <subcellularLocation>
        <location evidence="1">Secreted</location>
    </subcellularLocation>
</comment>
<comment type="PTM">
    <text evidence="3 4">Palmitoleoylation is required for efficient binding to frizzled receptors. Palmitoleoylation is necessary for proper trafficking to cell surface (By similarity). Depalmitoleoylated by NOTUM, leading to inhibit Wnt signaling pathway (By similarity).</text>
</comment>
<comment type="similarity">
    <text evidence="7">Belongs to the Wnt family.</text>
</comment>
<name>WNT1_STRPU</name>
<keyword id="KW-0217">Developmental protein</keyword>
<keyword id="KW-1015">Disulfide bond</keyword>
<keyword id="KW-0272">Extracellular matrix</keyword>
<keyword id="KW-0325">Glycoprotein</keyword>
<keyword id="KW-0449">Lipoprotein</keyword>
<keyword id="KW-1185">Reference proteome</keyword>
<keyword id="KW-0964">Secreted</keyword>
<keyword id="KW-0879">Wnt signaling pathway</keyword>
<feature type="chain" id="PRO_0000200607" description="Protein Wnt-1">
    <location>
        <begin position="1" status="less than"/>
        <end position="223"/>
    </location>
</feature>
<feature type="region of interest" description="Disordered" evidence="6">
    <location>
        <begin position="110"/>
        <end position="135"/>
    </location>
</feature>
<feature type="compositionally biased region" description="Polar residues" evidence="6">
    <location>
        <begin position="125"/>
        <end position="135"/>
    </location>
</feature>
<feature type="lipid moiety-binding region" description="O-palmitoleoyl serine; by PORCN" evidence="4">
    <location>
        <position position="78"/>
    </location>
</feature>
<feature type="glycosylation site" description="N-linked (GlcNAc...) asparagine" evidence="5">
    <location>
        <position position="169"/>
    </location>
</feature>
<feature type="disulfide bond" evidence="2">
    <location>
        <begin position="7"/>
        <end position="24"/>
    </location>
</feature>
<feature type="disulfide bond" evidence="2">
    <location>
        <begin position="72"/>
        <end position="86"/>
    </location>
</feature>
<feature type="disulfide bond" evidence="2">
    <location>
        <begin position="74"/>
        <end position="81"/>
    </location>
</feature>
<feature type="disulfide bond" evidence="2">
    <location>
        <begin position="152"/>
        <end position="183"/>
    </location>
</feature>
<feature type="disulfide bond" evidence="2">
    <location>
        <begin position="168"/>
        <end position="178"/>
    </location>
</feature>
<feature type="disulfide bond" evidence="2">
    <location>
        <begin position="182"/>
        <end position="222"/>
    </location>
</feature>
<feature type="disulfide bond" evidence="2">
    <location>
        <begin position="198"/>
        <end position="213"/>
    </location>
</feature>
<feature type="disulfide bond" evidence="2">
    <location>
        <begin position="200"/>
        <end position="210"/>
    </location>
</feature>
<feature type="disulfide bond" evidence="2">
    <location>
        <begin position="205"/>
        <end position="206"/>
    </location>
</feature>
<feature type="non-terminal residue">
    <location>
        <position position="1"/>
    </location>
</feature>
<organism>
    <name type="scientific">Strongylocentrotus purpuratus</name>
    <name type="common">Purple sea urchin</name>
    <dbReference type="NCBI Taxonomy" id="7668"/>
    <lineage>
        <taxon>Eukaryota</taxon>
        <taxon>Metazoa</taxon>
        <taxon>Echinodermata</taxon>
        <taxon>Eleutherozoa</taxon>
        <taxon>Echinozoa</taxon>
        <taxon>Echinoidea</taxon>
        <taxon>Euechinoidea</taxon>
        <taxon>Echinacea</taxon>
        <taxon>Camarodonta</taxon>
        <taxon>Echinidea</taxon>
        <taxon>Strongylocentrotidae</taxon>
        <taxon>Strongylocentrotus</taxon>
    </lineage>
</organism>
<proteinExistence type="evidence at transcript level"/>
<accession>P28094</accession>
<evidence type="ECO:0000250" key="1">
    <source>
        <dbReference type="UniProtKB" id="P04628"/>
    </source>
</evidence>
<evidence type="ECO:0000250" key="2">
    <source>
        <dbReference type="UniProtKB" id="P28026"/>
    </source>
</evidence>
<evidence type="ECO:0000250" key="3">
    <source>
        <dbReference type="UniProtKB" id="P56704"/>
    </source>
</evidence>
<evidence type="ECO:0000250" key="4">
    <source>
        <dbReference type="UniProtKB" id="Q91029"/>
    </source>
</evidence>
<evidence type="ECO:0000255" key="5"/>
<evidence type="ECO:0000256" key="6">
    <source>
        <dbReference type="SAM" id="MobiDB-lite"/>
    </source>
</evidence>
<evidence type="ECO:0000305" key="7"/>
<sequence length="223" mass="25236">TIESCTCDYKFRGDSGNDWEWGGCSDNADFGHRFGKKFVDSGEKGRDLRHAMNLHNNEAGRKTVSSEMRRECKCHGMSGSCTIETCWMRLPTFRTVGELIKERFDGASRVTMRNDGSPSDRETESSFVPYNPSHKQPASRDLVYFENSPDFCERNDKFGTPGTRGRECNATSLGVDGCDLMCCSRGSTTTEIKVKERCSCTFHWCCKVKCEECTSFRTVHRCL</sequence>
<gene>
    <name type="primary">WNT-1</name>
</gene>
<protein>
    <recommendedName>
        <fullName>Protein Wnt-1</fullName>
    </recommendedName>
</protein>
<reference key="1">
    <citation type="submission" date="1997-03" db="EMBL/GenBank/DDBJ databases">
        <authorList>
            <person name="Ferkowicz M.J."/>
            <person name="Stander M.C."/>
            <person name="Raff R.A."/>
        </authorList>
    </citation>
    <scope>NUCLEOTIDE SEQUENCE</scope>
</reference>
<reference key="2">
    <citation type="journal article" date="1992" name="Proc. Natl. Acad. Sci. U.S.A.">
        <title>Diversification of the Wnt gene family on the ancestral lineage of vertebrates.</title>
        <authorList>
            <person name="Sidow A."/>
        </authorList>
    </citation>
    <scope>NUCLEOTIDE SEQUENCE OF 78-202</scope>
</reference>
<dbReference type="EMBL" id="U88625">
    <property type="protein sequence ID" value="AAC69241.1"/>
    <property type="molecule type" value="mRNA"/>
</dbReference>
<dbReference type="EMBL" id="M91302">
    <property type="protein sequence ID" value="AAA30083.1"/>
    <property type="molecule type" value="Genomic_DNA"/>
</dbReference>
<dbReference type="SMR" id="P28094"/>
<dbReference type="FunCoup" id="P28094">
    <property type="interactions" value="835"/>
</dbReference>
<dbReference type="STRING" id="7668.P28094"/>
<dbReference type="GlyCosmos" id="P28094">
    <property type="glycosylation" value="1 site, No reported glycans"/>
</dbReference>
<dbReference type="eggNOG" id="KOG3913">
    <property type="taxonomic scope" value="Eukaryota"/>
</dbReference>
<dbReference type="HOGENOM" id="CLU_033039_1_1_1"/>
<dbReference type="InParanoid" id="P28094"/>
<dbReference type="Proteomes" id="UP000007110">
    <property type="component" value="Unassembled WGS sequence"/>
</dbReference>
<dbReference type="GO" id="GO:0005615">
    <property type="term" value="C:extracellular space"/>
    <property type="evidence" value="ECO:0000318"/>
    <property type="project" value="GO_Central"/>
</dbReference>
<dbReference type="GO" id="GO:0005125">
    <property type="term" value="F:cytokine activity"/>
    <property type="evidence" value="ECO:0000318"/>
    <property type="project" value="GO_Central"/>
</dbReference>
<dbReference type="GO" id="GO:0005109">
    <property type="term" value="F:frizzled binding"/>
    <property type="evidence" value="ECO:0000318"/>
    <property type="project" value="GO_Central"/>
</dbReference>
<dbReference type="GO" id="GO:0060070">
    <property type="term" value="P:canonical Wnt signaling pathway"/>
    <property type="evidence" value="ECO:0000318"/>
    <property type="project" value="GO_Central"/>
</dbReference>
<dbReference type="GO" id="GO:0045165">
    <property type="term" value="P:cell fate commitment"/>
    <property type="evidence" value="ECO:0000318"/>
    <property type="project" value="GO_Central"/>
</dbReference>
<dbReference type="GO" id="GO:0030182">
    <property type="term" value="P:neuron differentiation"/>
    <property type="evidence" value="ECO:0000318"/>
    <property type="project" value="GO_Central"/>
</dbReference>
<dbReference type="FunFam" id="3.30.2460.20:FF:000001">
    <property type="entry name" value="Wnt homolog"/>
    <property type="match status" value="1"/>
</dbReference>
<dbReference type="Gene3D" id="3.30.2460.20">
    <property type="match status" value="1"/>
</dbReference>
<dbReference type="InterPro" id="IPR005817">
    <property type="entry name" value="Wnt"/>
</dbReference>
<dbReference type="InterPro" id="IPR043158">
    <property type="entry name" value="Wnt_C"/>
</dbReference>
<dbReference type="InterPro" id="IPR018161">
    <property type="entry name" value="Wnt_CS"/>
</dbReference>
<dbReference type="PANTHER" id="PTHR12027:SF91">
    <property type="entry name" value="PROTO-ONCOGENE WNT-1"/>
    <property type="match status" value="1"/>
</dbReference>
<dbReference type="PANTHER" id="PTHR12027">
    <property type="entry name" value="WNT RELATED"/>
    <property type="match status" value="1"/>
</dbReference>
<dbReference type="Pfam" id="PF00110">
    <property type="entry name" value="wnt"/>
    <property type="match status" value="1"/>
</dbReference>
<dbReference type="PRINTS" id="PR01349">
    <property type="entry name" value="WNTPROTEIN"/>
</dbReference>
<dbReference type="SMART" id="SM00097">
    <property type="entry name" value="WNT1"/>
    <property type="match status" value="1"/>
</dbReference>
<dbReference type="PROSITE" id="PS00246">
    <property type="entry name" value="WNT1"/>
    <property type="match status" value="1"/>
</dbReference>